<name>RL7_OLEA2</name>
<dbReference type="EMBL" id="CP000112">
    <property type="protein sequence ID" value="ABB39789.1"/>
    <property type="molecule type" value="Genomic_DNA"/>
</dbReference>
<dbReference type="RefSeq" id="WP_011368763.1">
    <property type="nucleotide sequence ID" value="NC_007519.1"/>
</dbReference>
<dbReference type="SMR" id="Q30X07"/>
<dbReference type="STRING" id="207559.Dde_2995"/>
<dbReference type="KEGG" id="dde:Dde_2995"/>
<dbReference type="eggNOG" id="COG0222">
    <property type="taxonomic scope" value="Bacteria"/>
</dbReference>
<dbReference type="HOGENOM" id="CLU_086499_3_0_7"/>
<dbReference type="Proteomes" id="UP000002710">
    <property type="component" value="Chromosome"/>
</dbReference>
<dbReference type="GO" id="GO:0022625">
    <property type="term" value="C:cytosolic large ribosomal subunit"/>
    <property type="evidence" value="ECO:0007669"/>
    <property type="project" value="TreeGrafter"/>
</dbReference>
<dbReference type="GO" id="GO:0003729">
    <property type="term" value="F:mRNA binding"/>
    <property type="evidence" value="ECO:0007669"/>
    <property type="project" value="TreeGrafter"/>
</dbReference>
<dbReference type="GO" id="GO:0003735">
    <property type="term" value="F:structural constituent of ribosome"/>
    <property type="evidence" value="ECO:0007669"/>
    <property type="project" value="InterPro"/>
</dbReference>
<dbReference type="GO" id="GO:0006412">
    <property type="term" value="P:translation"/>
    <property type="evidence" value="ECO:0007669"/>
    <property type="project" value="UniProtKB-UniRule"/>
</dbReference>
<dbReference type="CDD" id="cd00387">
    <property type="entry name" value="Ribosomal_L7_L12"/>
    <property type="match status" value="1"/>
</dbReference>
<dbReference type="FunFam" id="3.30.1390.10:FF:000001">
    <property type="entry name" value="50S ribosomal protein L7/L12"/>
    <property type="match status" value="1"/>
</dbReference>
<dbReference type="Gene3D" id="3.30.1390.10">
    <property type="match status" value="1"/>
</dbReference>
<dbReference type="Gene3D" id="1.20.5.710">
    <property type="entry name" value="Single helix bin"/>
    <property type="match status" value="1"/>
</dbReference>
<dbReference type="HAMAP" id="MF_00368">
    <property type="entry name" value="Ribosomal_bL12"/>
    <property type="match status" value="1"/>
</dbReference>
<dbReference type="InterPro" id="IPR000206">
    <property type="entry name" value="Ribosomal_bL12"/>
</dbReference>
<dbReference type="InterPro" id="IPR013823">
    <property type="entry name" value="Ribosomal_bL12_C"/>
</dbReference>
<dbReference type="InterPro" id="IPR014719">
    <property type="entry name" value="Ribosomal_bL12_C/ClpS-like"/>
</dbReference>
<dbReference type="InterPro" id="IPR008932">
    <property type="entry name" value="Ribosomal_bL12_oligo"/>
</dbReference>
<dbReference type="InterPro" id="IPR036235">
    <property type="entry name" value="Ribosomal_bL12_oligo_N_sf"/>
</dbReference>
<dbReference type="NCBIfam" id="TIGR00855">
    <property type="entry name" value="L12"/>
    <property type="match status" value="1"/>
</dbReference>
<dbReference type="PANTHER" id="PTHR45987">
    <property type="entry name" value="39S RIBOSOMAL PROTEIN L12"/>
    <property type="match status" value="1"/>
</dbReference>
<dbReference type="PANTHER" id="PTHR45987:SF4">
    <property type="entry name" value="LARGE RIBOSOMAL SUBUNIT PROTEIN BL12M"/>
    <property type="match status" value="1"/>
</dbReference>
<dbReference type="Pfam" id="PF00542">
    <property type="entry name" value="Ribosomal_L12"/>
    <property type="match status" value="1"/>
</dbReference>
<dbReference type="Pfam" id="PF16320">
    <property type="entry name" value="Ribosomal_L12_N"/>
    <property type="match status" value="1"/>
</dbReference>
<dbReference type="SUPFAM" id="SSF54736">
    <property type="entry name" value="ClpS-like"/>
    <property type="match status" value="1"/>
</dbReference>
<dbReference type="SUPFAM" id="SSF48300">
    <property type="entry name" value="Ribosomal protein L7/12, oligomerisation (N-terminal) domain"/>
    <property type="match status" value="1"/>
</dbReference>
<gene>
    <name evidence="1" type="primary">rplL</name>
    <name type="ordered locus">Dde_2995</name>
</gene>
<sequence>MSDITKEQVVEFIAGMTVLELSEFIKELEEKFGVSAAAPVAAMAAAPAEAAAPAEEEKTEFDVILKSPGANKIAVIKVVRALTGLGLKEAKEKVDGTPSTLKEAVSKDDAEEAAKQLKEAGAEVEVK</sequence>
<accession>Q30X07</accession>
<comment type="function">
    <text evidence="1">Forms part of the ribosomal stalk which helps the ribosome interact with GTP-bound translation factors. Is thus essential for accurate translation.</text>
</comment>
<comment type="subunit">
    <text evidence="1">Homodimer. Part of the ribosomal stalk of the 50S ribosomal subunit. Forms a multimeric L10(L12)X complex, where L10 forms an elongated spine to which 2 to 4 L12 dimers bind in a sequential fashion. Binds GTP-bound translation factors.</text>
</comment>
<comment type="similarity">
    <text evidence="1">Belongs to the bacterial ribosomal protein bL12 family.</text>
</comment>
<feature type="chain" id="PRO_0000243419" description="Large ribosomal subunit protein bL12">
    <location>
        <begin position="1"/>
        <end position="127"/>
    </location>
</feature>
<feature type="region of interest" description="Disordered" evidence="2">
    <location>
        <begin position="96"/>
        <end position="127"/>
    </location>
</feature>
<feature type="compositionally biased region" description="Basic and acidic residues" evidence="2">
    <location>
        <begin position="104"/>
        <end position="127"/>
    </location>
</feature>
<proteinExistence type="inferred from homology"/>
<reference key="1">
    <citation type="journal article" date="2011" name="J. Bacteriol.">
        <title>Complete genome sequence and updated annotation of Desulfovibrio alaskensis G20.</title>
        <authorList>
            <person name="Hauser L.J."/>
            <person name="Land M.L."/>
            <person name="Brown S.D."/>
            <person name="Larimer F."/>
            <person name="Keller K.L."/>
            <person name="Rapp-Giles B.J."/>
            <person name="Price M.N."/>
            <person name="Lin M."/>
            <person name="Bruce D.C."/>
            <person name="Detter J.C."/>
            <person name="Tapia R."/>
            <person name="Han C.S."/>
            <person name="Goodwin L.A."/>
            <person name="Cheng J.F."/>
            <person name="Pitluck S."/>
            <person name="Copeland A."/>
            <person name="Lucas S."/>
            <person name="Nolan M."/>
            <person name="Lapidus A.L."/>
            <person name="Palumbo A.V."/>
            <person name="Wall J.D."/>
        </authorList>
    </citation>
    <scope>NUCLEOTIDE SEQUENCE [LARGE SCALE GENOMIC DNA]</scope>
    <source>
        <strain>ATCC BAA-1058 / DSM 17464 / G20</strain>
    </source>
</reference>
<keyword id="KW-1185">Reference proteome</keyword>
<keyword id="KW-0687">Ribonucleoprotein</keyword>
<keyword id="KW-0689">Ribosomal protein</keyword>
<protein>
    <recommendedName>
        <fullName evidence="1">Large ribosomal subunit protein bL12</fullName>
    </recommendedName>
    <alternativeName>
        <fullName evidence="3">50S ribosomal protein L7/L12</fullName>
    </alternativeName>
</protein>
<organism>
    <name type="scientific">Oleidesulfovibrio alaskensis (strain ATCC BAA-1058 / DSM 17464 / G20)</name>
    <name type="common">Desulfovibrio alaskensis</name>
    <dbReference type="NCBI Taxonomy" id="207559"/>
    <lineage>
        <taxon>Bacteria</taxon>
        <taxon>Pseudomonadati</taxon>
        <taxon>Thermodesulfobacteriota</taxon>
        <taxon>Desulfovibrionia</taxon>
        <taxon>Desulfovibrionales</taxon>
        <taxon>Desulfovibrionaceae</taxon>
        <taxon>Oleidesulfovibrio</taxon>
    </lineage>
</organism>
<evidence type="ECO:0000255" key="1">
    <source>
        <dbReference type="HAMAP-Rule" id="MF_00368"/>
    </source>
</evidence>
<evidence type="ECO:0000256" key="2">
    <source>
        <dbReference type="SAM" id="MobiDB-lite"/>
    </source>
</evidence>
<evidence type="ECO:0000305" key="3"/>